<evidence type="ECO:0000255" key="1">
    <source>
        <dbReference type="HAMAP-Rule" id="MF_01217"/>
    </source>
</evidence>
<evidence type="ECO:0000255" key="2">
    <source>
        <dbReference type="PROSITE-ProRule" id="PRU00258"/>
    </source>
</evidence>
<gene>
    <name evidence="1" type="primary">acpP</name>
    <name type="ordered locus">Nwi_1687</name>
</gene>
<dbReference type="EMBL" id="CP000115">
    <property type="protein sequence ID" value="ABA04948.1"/>
    <property type="molecule type" value="Genomic_DNA"/>
</dbReference>
<dbReference type="RefSeq" id="WP_002716125.1">
    <property type="nucleotide sequence ID" value="NC_007406.1"/>
</dbReference>
<dbReference type="SMR" id="Q3SRZ3"/>
<dbReference type="STRING" id="323098.Nwi_1687"/>
<dbReference type="KEGG" id="nwi:Nwi_1687"/>
<dbReference type="eggNOG" id="COG0236">
    <property type="taxonomic scope" value="Bacteria"/>
</dbReference>
<dbReference type="HOGENOM" id="CLU_108696_5_1_5"/>
<dbReference type="OrthoDB" id="9804551at2"/>
<dbReference type="UniPathway" id="UPA00094"/>
<dbReference type="Proteomes" id="UP000002531">
    <property type="component" value="Chromosome"/>
</dbReference>
<dbReference type="GO" id="GO:0005829">
    <property type="term" value="C:cytosol"/>
    <property type="evidence" value="ECO:0007669"/>
    <property type="project" value="TreeGrafter"/>
</dbReference>
<dbReference type="GO" id="GO:0016020">
    <property type="term" value="C:membrane"/>
    <property type="evidence" value="ECO:0007669"/>
    <property type="project" value="GOC"/>
</dbReference>
<dbReference type="GO" id="GO:0000035">
    <property type="term" value="F:acyl binding"/>
    <property type="evidence" value="ECO:0007669"/>
    <property type="project" value="TreeGrafter"/>
</dbReference>
<dbReference type="GO" id="GO:0000036">
    <property type="term" value="F:acyl carrier activity"/>
    <property type="evidence" value="ECO:0007669"/>
    <property type="project" value="UniProtKB-UniRule"/>
</dbReference>
<dbReference type="GO" id="GO:0031177">
    <property type="term" value="F:phosphopantetheine binding"/>
    <property type="evidence" value="ECO:0007669"/>
    <property type="project" value="InterPro"/>
</dbReference>
<dbReference type="GO" id="GO:0009245">
    <property type="term" value="P:lipid A biosynthetic process"/>
    <property type="evidence" value="ECO:0007669"/>
    <property type="project" value="TreeGrafter"/>
</dbReference>
<dbReference type="FunFam" id="1.10.1200.10:FF:000012">
    <property type="entry name" value="Acyl carrier protein"/>
    <property type="match status" value="1"/>
</dbReference>
<dbReference type="Gene3D" id="1.10.1200.10">
    <property type="entry name" value="ACP-like"/>
    <property type="match status" value="1"/>
</dbReference>
<dbReference type="HAMAP" id="MF_01217">
    <property type="entry name" value="Acyl_carrier"/>
    <property type="match status" value="1"/>
</dbReference>
<dbReference type="InterPro" id="IPR003231">
    <property type="entry name" value="ACP"/>
</dbReference>
<dbReference type="InterPro" id="IPR036736">
    <property type="entry name" value="ACP-like_sf"/>
</dbReference>
<dbReference type="InterPro" id="IPR020806">
    <property type="entry name" value="PKS_PP-bd"/>
</dbReference>
<dbReference type="InterPro" id="IPR009081">
    <property type="entry name" value="PP-bd_ACP"/>
</dbReference>
<dbReference type="InterPro" id="IPR006162">
    <property type="entry name" value="Ppantetheine_attach_site"/>
</dbReference>
<dbReference type="NCBIfam" id="TIGR00517">
    <property type="entry name" value="acyl_carrier"/>
    <property type="match status" value="1"/>
</dbReference>
<dbReference type="NCBIfam" id="NF002148">
    <property type="entry name" value="PRK00982.1-2"/>
    <property type="match status" value="1"/>
</dbReference>
<dbReference type="NCBIfam" id="NF002149">
    <property type="entry name" value="PRK00982.1-3"/>
    <property type="match status" value="1"/>
</dbReference>
<dbReference type="NCBIfam" id="NF002150">
    <property type="entry name" value="PRK00982.1-4"/>
    <property type="match status" value="1"/>
</dbReference>
<dbReference type="NCBIfam" id="NF002151">
    <property type="entry name" value="PRK00982.1-5"/>
    <property type="match status" value="1"/>
</dbReference>
<dbReference type="PANTHER" id="PTHR20863">
    <property type="entry name" value="ACYL CARRIER PROTEIN"/>
    <property type="match status" value="1"/>
</dbReference>
<dbReference type="PANTHER" id="PTHR20863:SF76">
    <property type="entry name" value="CARRIER DOMAIN-CONTAINING PROTEIN"/>
    <property type="match status" value="1"/>
</dbReference>
<dbReference type="Pfam" id="PF00550">
    <property type="entry name" value="PP-binding"/>
    <property type="match status" value="1"/>
</dbReference>
<dbReference type="SMART" id="SM00823">
    <property type="entry name" value="PKS_PP"/>
    <property type="match status" value="1"/>
</dbReference>
<dbReference type="SUPFAM" id="SSF47336">
    <property type="entry name" value="ACP-like"/>
    <property type="match status" value="1"/>
</dbReference>
<dbReference type="PROSITE" id="PS50075">
    <property type="entry name" value="CARRIER"/>
    <property type="match status" value="1"/>
</dbReference>
<dbReference type="PROSITE" id="PS00012">
    <property type="entry name" value="PHOSPHOPANTETHEINE"/>
    <property type="match status" value="1"/>
</dbReference>
<comment type="function">
    <text evidence="1">Carrier of the growing fatty acid chain in fatty acid biosynthesis.</text>
</comment>
<comment type="pathway">
    <text evidence="1">Lipid metabolism; fatty acid biosynthesis.</text>
</comment>
<comment type="subcellular location">
    <subcellularLocation>
        <location evidence="1">Cytoplasm</location>
    </subcellularLocation>
</comment>
<comment type="PTM">
    <text evidence="1">4'-phosphopantetheine is transferred from CoA to a specific serine of apo-ACP by AcpS. This modification is essential for activity because fatty acids are bound in thioester linkage to the sulfhydryl of the prosthetic group.</text>
</comment>
<comment type="similarity">
    <text evidence="1">Belongs to the acyl carrier protein (ACP) family.</text>
</comment>
<feature type="chain" id="PRO_1000066645" description="Acyl carrier protein">
    <location>
        <begin position="1"/>
        <end position="79"/>
    </location>
</feature>
<feature type="domain" description="Carrier" evidence="2">
    <location>
        <begin position="2"/>
        <end position="77"/>
    </location>
</feature>
<feature type="modified residue" description="O-(pantetheine 4'-phosphoryl)serine" evidence="2">
    <location>
        <position position="37"/>
    </location>
</feature>
<sequence length="79" mass="8573">MSEIGERVKKIVVEHLGVEPEKVVDSASFIDDLGADSLDTVELVMAFEEEFGCEIPDDAAETILTVGDATKFLEKNAKS</sequence>
<organism>
    <name type="scientific">Nitrobacter winogradskyi (strain ATCC 25391 / DSM 10237 / CIP 104748 / NCIMB 11846 / Nb-255)</name>
    <dbReference type="NCBI Taxonomy" id="323098"/>
    <lineage>
        <taxon>Bacteria</taxon>
        <taxon>Pseudomonadati</taxon>
        <taxon>Pseudomonadota</taxon>
        <taxon>Alphaproteobacteria</taxon>
        <taxon>Hyphomicrobiales</taxon>
        <taxon>Nitrobacteraceae</taxon>
        <taxon>Nitrobacter</taxon>
    </lineage>
</organism>
<accession>Q3SRZ3</accession>
<keyword id="KW-0963">Cytoplasm</keyword>
<keyword id="KW-0275">Fatty acid biosynthesis</keyword>
<keyword id="KW-0276">Fatty acid metabolism</keyword>
<keyword id="KW-0444">Lipid biosynthesis</keyword>
<keyword id="KW-0443">Lipid metabolism</keyword>
<keyword id="KW-0596">Phosphopantetheine</keyword>
<keyword id="KW-0597">Phosphoprotein</keyword>
<keyword id="KW-1185">Reference proteome</keyword>
<protein>
    <recommendedName>
        <fullName evidence="1">Acyl carrier protein</fullName>
        <shortName evidence="1">ACP</shortName>
    </recommendedName>
</protein>
<proteinExistence type="inferred from homology"/>
<reference key="1">
    <citation type="journal article" date="2006" name="Appl. Environ. Microbiol.">
        <title>Genome sequence of the chemolithoautotrophic nitrite-oxidizing bacterium Nitrobacter winogradskyi Nb-255.</title>
        <authorList>
            <person name="Starkenburg S.R."/>
            <person name="Chain P.S.G."/>
            <person name="Sayavedra-Soto L.A."/>
            <person name="Hauser L."/>
            <person name="Land M.L."/>
            <person name="Larimer F.W."/>
            <person name="Malfatti S.A."/>
            <person name="Klotz M.G."/>
            <person name="Bottomley P.J."/>
            <person name="Arp D.J."/>
            <person name="Hickey W.J."/>
        </authorList>
    </citation>
    <scope>NUCLEOTIDE SEQUENCE [LARGE SCALE GENOMIC DNA]</scope>
    <source>
        <strain>ATCC 25391 / DSM 10237 / CIP 104748 / NCIMB 11846 / Nb-255</strain>
    </source>
</reference>
<name>ACP_NITWN</name>